<protein>
    <recommendedName>
        <fullName>Membrane antigen containing repeating peptides</fullName>
    </recommendedName>
    <alternativeName>
        <fullName>Clone 39</fullName>
    </alternativeName>
</protein>
<accession>P14700</accession>
<feature type="chain" id="PRO_0000096240" description="Membrane antigen containing repeating peptides">
    <location>
        <begin position="1" status="less than"/>
        <end position="53" status="greater than"/>
    </location>
</feature>
<feature type="repeat" description="1">
    <location>
        <begin position="1"/>
        <end position="10"/>
    </location>
</feature>
<feature type="repeat" description="2">
    <location>
        <begin position="11"/>
        <end position="20"/>
    </location>
</feature>
<feature type="repeat" description="3">
    <location>
        <begin position="21"/>
        <end position="30"/>
    </location>
</feature>
<feature type="repeat" description="4">
    <location>
        <begin position="31"/>
        <end position="40"/>
    </location>
</feature>
<feature type="repeat" description="5">
    <location>
        <begin position="41"/>
        <end position="50"/>
    </location>
</feature>
<feature type="repeat" description="6">
    <location>
        <begin position="51"/>
        <end position="53" status="greater than"/>
    </location>
</feature>
<feature type="region of interest" description="6 X 10 AA tandem repeats">
    <location>
        <begin position="1"/>
        <end position="53" status="greater than"/>
    </location>
</feature>
<feature type="region of interest" description="Disordered" evidence="1">
    <location>
        <begin position="1"/>
        <end position="53"/>
    </location>
</feature>
<feature type="non-terminal residue">
    <location>
        <position position="1"/>
    </location>
</feature>
<feature type="non-terminal residue">
    <location>
        <position position="53"/>
    </location>
</feature>
<dbReference type="EMBL" id="X06556">
    <property type="protein sequence ID" value="CAA29799.1"/>
    <property type="molecule type" value="Genomic_DNA"/>
</dbReference>
<dbReference type="PIR" id="PT0028">
    <property type="entry name" value="PT0028"/>
</dbReference>
<dbReference type="eggNOG" id="ENOG502S61F">
    <property type="taxonomic scope" value="Eukaryota"/>
</dbReference>
<dbReference type="GO" id="GO:0016020">
    <property type="term" value="C:membrane"/>
    <property type="evidence" value="ECO:0007669"/>
    <property type="project" value="UniProtKB-SubCell"/>
</dbReference>
<keyword id="KW-0472">Membrane</keyword>
<keyword id="KW-0677">Repeat</keyword>
<proteinExistence type="predicted"/>
<organism>
    <name type="scientific">Leishmania major</name>
    <dbReference type="NCBI Taxonomy" id="5664"/>
    <lineage>
        <taxon>Eukaryota</taxon>
        <taxon>Discoba</taxon>
        <taxon>Euglenozoa</taxon>
        <taxon>Kinetoplastea</taxon>
        <taxon>Metakinetoplastina</taxon>
        <taxon>Trypanosomatida</taxon>
        <taxon>Trypanosomatidae</taxon>
        <taxon>Leishmaniinae</taxon>
        <taxon>Leishmania</taxon>
    </lineage>
</organism>
<name>MAR3_LEIMA</name>
<reference key="1">
    <citation type="journal article" date="1987" name="J. Exp. Med.">
        <title>Identification of Leishmania genes encoding proteins containing tandemly repeating peptides.</title>
        <authorList>
            <person name="Wallis A.E."/>
            <person name="McMaster W.R."/>
        </authorList>
    </citation>
    <scope>NUCLEOTIDE SEQUENCE [GENOMIC DNA] OF 1-44</scope>
    <source>
        <strain>NIH S</strain>
    </source>
</reference>
<reference key="2">
    <citation type="submission" date="1989-10" db="EMBL/GenBank/DDBJ databases">
        <authorList>
            <person name="Wallis A.E."/>
        </authorList>
    </citation>
    <scope>NUCLEOTIDE SEQUENCE [GENOMIC DNA]</scope>
</reference>
<comment type="subcellular location">
    <subcellularLocation>
        <location>Membrane</location>
    </subcellularLocation>
</comment>
<sequence>EAEEAARLQAEAEEAARQQAEAEEAARLQAEAEEAARLQAEAEEAARLQAEAE</sequence>
<evidence type="ECO:0000256" key="1">
    <source>
        <dbReference type="SAM" id="MobiDB-lite"/>
    </source>
</evidence>